<keyword id="KW-0378">Hydrolase</keyword>
<keyword id="KW-0460">Magnesium</keyword>
<keyword id="KW-0511">Multifunctional enzyme</keyword>
<keyword id="KW-0535">Nitrogen fixation</keyword>
<keyword id="KW-0548">Nucleotidyltransferase</keyword>
<keyword id="KW-1185">Reference proteome</keyword>
<keyword id="KW-0677">Repeat</keyword>
<keyword id="KW-0808">Transferase</keyword>
<accession>P56884</accession>
<comment type="function">
    <text evidence="1">Modifies, by uridylylation and deuridylylation, the PII regulatory proteins (GlnB and homologs), in response to the nitrogen status of the cell that GlnD senses through the glutamine level. Under low glutamine levels, catalyzes the conversion of the PII proteins and UTP to PII-UMP and PPi, while under higher glutamine levels, GlnD hydrolyzes PII-UMP to PII and UMP (deuridylylation). Thus, controls uridylylation state and activity of the PII proteins, and plays an important role in the regulation of nitrogen fixation and metabolism.</text>
</comment>
<comment type="catalytic activity">
    <reaction evidence="1">
        <text>[protein-PII]-L-tyrosine + UTP = [protein-PII]-uridylyl-L-tyrosine + diphosphate</text>
        <dbReference type="Rhea" id="RHEA:13673"/>
        <dbReference type="Rhea" id="RHEA-COMP:12147"/>
        <dbReference type="Rhea" id="RHEA-COMP:12148"/>
        <dbReference type="ChEBI" id="CHEBI:33019"/>
        <dbReference type="ChEBI" id="CHEBI:46398"/>
        <dbReference type="ChEBI" id="CHEBI:46858"/>
        <dbReference type="ChEBI" id="CHEBI:90602"/>
        <dbReference type="EC" id="2.7.7.59"/>
    </reaction>
</comment>
<comment type="catalytic activity">
    <reaction evidence="1">
        <text>[protein-PII]-uridylyl-L-tyrosine + H2O = [protein-PII]-L-tyrosine + UMP + H(+)</text>
        <dbReference type="Rhea" id="RHEA:48600"/>
        <dbReference type="Rhea" id="RHEA-COMP:12147"/>
        <dbReference type="Rhea" id="RHEA-COMP:12148"/>
        <dbReference type="ChEBI" id="CHEBI:15377"/>
        <dbReference type="ChEBI" id="CHEBI:15378"/>
        <dbReference type="ChEBI" id="CHEBI:46858"/>
        <dbReference type="ChEBI" id="CHEBI:57865"/>
        <dbReference type="ChEBI" id="CHEBI:90602"/>
    </reaction>
</comment>
<comment type="cofactor">
    <cofactor evidence="1">
        <name>Mg(2+)</name>
        <dbReference type="ChEBI" id="CHEBI:18420"/>
    </cofactor>
</comment>
<comment type="activity regulation">
    <text evidence="1">Uridylyltransferase (UTase) activity is inhibited by glutamine, while glutamine activates uridylyl-removing (UR) activity.</text>
</comment>
<comment type="domain">
    <text evidence="1">Has four distinct domains: an N-terminal nucleotidyltransferase (NT) domain responsible for UTase activity, a central HD domain that encodes UR activity, and two C-terminal ACT domains that seem to have a role in glutamine sensing.</text>
</comment>
<comment type="similarity">
    <text evidence="1">Belongs to the GlnD family.</text>
</comment>
<organism>
    <name type="scientific">Rhizobium meliloti (strain 1021)</name>
    <name type="common">Ensifer meliloti</name>
    <name type="synonym">Sinorhizobium meliloti</name>
    <dbReference type="NCBI Taxonomy" id="266834"/>
    <lineage>
        <taxon>Bacteria</taxon>
        <taxon>Pseudomonadati</taxon>
        <taxon>Pseudomonadota</taxon>
        <taxon>Alphaproteobacteria</taxon>
        <taxon>Hyphomicrobiales</taxon>
        <taxon>Rhizobiaceae</taxon>
        <taxon>Sinorhizobium/Ensifer group</taxon>
        <taxon>Sinorhizobium</taxon>
    </lineage>
</organism>
<protein>
    <recommendedName>
        <fullName evidence="1">Bifunctional uridylyltransferase/uridylyl-removing enzyme</fullName>
        <shortName evidence="1">UTase/UR</shortName>
    </recommendedName>
    <alternativeName>
        <fullName evidence="1">Bifunctional [protein-PII] modification enzyme</fullName>
    </alternativeName>
    <alternativeName>
        <fullName evidence="1">Bifunctional nitrogen sensor protein</fullName>
    </alternativeName>
    <domain>
        <recommendedName>
            <fullName evidence="1">[Protein-PII] uridylyltransferase</fullName>
            <shortName evidence="1">PII uridylyltransferase</shortName>
            <shortName evidence="1">UTase</shortName>
            <ecNumber evidence="1">2.7.7.59</ecNumber>
        </recommendedName>
    </domain>
    <domain>
        <recommendedName>
            <fullName evidence="1">[Protein-PII]-UMP uridylyl-removing enzyme</fullName>
            <shortName evidence="1">UR</shortName>
            <ecNumber evidence="1">3.1.4.-</ecNumber>
        </recommendedName>
    </domain>
</protein>
<feature type="chain" id="PRO_0000192760" description="Bifunctional uridylyltransferase/uridylyl-removing enzyme">
    <location>
        <begin position="1"/>
        <end position="949"/>
    </location>
</feature>
<feature type="domain" description="HD" evidence="2">
    <location>
        <begin position="494"/>
        <end position="610"/>
    </location>
</feature>
<feature type="domain" description="ACT 1" evidence="1">
    <location>
        <begin position="734"/>
        <end position="816"/>
    </location>
</feature>
<feature type="domain" description="ACT 2" evidence="1">
    <location>
        <begin position="845"/>
        <end position="926"/>
    </location>
</feature>
<feature type="region of interest" description="Uridylyltransferase">
    <location>
        <begin position="1"/>
        <end position="377"/>
    </location>
</feature>
<feature type="region of interest" description="Uridylyl-removing">
    <location>
        <begin position="378"/>
        <end position="733"/>
    </location>
</feature>
<feature type="region of interest" description="Disordered" evidence="3">
    <location>
        <begin position="926"/>
        <end position="949"/>
    </location>
</feature>
<evidence type="ECO:0000255" key="1">
    <source>
        <dbReference type="HAMAP-Rule" id="MF_00277"/>
    </source>
</evidence>
<evidence type="ECO:0000255" key="2">
    <source>
        <dbReference type="PROSITE-ProRule" id="PRU01175"/>
    </source>
</evidence>
<evidence type="ECO:0000256" key="3">
    <source>
        <dbReference type="SAM" id="MobiDB-lite"/>
    </source>
</evidence>
<name>GLND_RHIME</name>
<dbReference type="EC" id="2.7.7.59" evidence="1"/>
<dbReference type="EC" id="3.1.4.-" evidence="1"/>
<dbReference type="EMBL" id="AF227730">
    <property type="protein sequence ID" value="AAF37852.1"/>
    <property type="molecule type" value="Genomic_DNA"/>
</dbReference>
<dbReference type="EMBL" id="AL591688">
    <property type="protein sequence ID" value="CAC41833.1"/>
    <property type="molecule type" value="Genomic_DNA"/>
</dbReference>
<dbReference type="RefSeq" id="NP_384502.1">
    <property type="nucleotide sequence ID" value="NC_003047.1"/>
</dbReference>
<dbReference type="RefSeq" id="WP_003527696.1">
    <property type="nucleotide sequence ID" value="NC_003047.1"/>
</dbReference>
<dbReference type="SMR" id="P56884"/>
<dbReference type="EnsemblBacteria" id="CAC41833">
    <property type="protein sequence ID" value="CAC41833"/>
    <property type="gene ID" value="SMc01124"/>
</dbReference>
<dbReference type="KEGG" id="sme:SMc01124"/>
<dbReference type="PATRIC" id="fig|266834.11.peg.1769"/>
<dbReference type="eggNOG" id="COG2844">
    <property type="taxonomic scope" value="Bacteria"/>
</dbReference>
<dbReference type="HOGENOM" id="CLU_012833_1_0_5"/>
<dbReference type="OrthoDB" id="9758038at2"/>
<dbReference type="BRENDA" id="2.7.7.59">
    <property type="organism ID" value="5347"/>
</dbReference>
<dbReference type="Proteomes" id="UP000001976">
    <property type="component" value="Chromosome"/>
</dbReference>
<dbReference type="GO" id="GO:0008773">
    <property type="term" value="F:[protein-PII] uridylyltransferase activity"/>
    <property type="evidence" value="ECO:0007669"/>
    <property type="project" value="UniProtKB-UniRule"/>
</dbReference>
<dbReference type="GO" id="GO:0008081">
    <property type="term" value="F:phosphoric diester hydrolase activity"/>
    <property type="evidence" value="ECO:0007669"/>
    <property type="project" value="UniProtKB-UniRule"/>
</dbReference>
<dbReference type="GO" id="GO:0009399">
    <property type="term" value="P:nitrogen fixation"/>
    <property type="evidence" value="ECO:0007669"/>
    <property type="project" value="UniProtKB-UniRule"/>
</dbReference>
<dbReference type="GO" id="GO:0006808">
    <property type="term" value="P:regulation of nitrogen utilization"/>
    <property type="evidence" value="ECO:0007669"/>
    <property type="project" value="UniProtKB-UniRule"/>
</dbReference>
<dbReference type="CDD" id="cd04899">
    <property type="entry name" value="ACT_ACR-UUR-like_2"/>
    <property type="match status" value="1"/>
</dbReference>
<dbReference type="CDD" id="cd04900">
    <property type="entry name" value="ACT_UUR-like_1"/>
    <property type="match status" value="1"/>
</dbReference>
<dbReference type="CDD" id="cd00077">
    <property type="entry name" value="HDc"/>
    <property type="match status" value="1"/>
</dbReference>
<dbReference type="CDD" id="cd05401">
    <property type="entry name" value="NT_GlnE_GlnD_like"/>
    <property type="match status" value="1"/>
</dbReference>
<dbReference type="Gene3D" id="3.30.70.260">
    <property type="match status" value="1"/>
</dbReference>
<dbReference type="Gene3D" id="3.30.460.10">
    <property type="entry name" value="Beta Polymerase, domain 2"/>
    <property type="match status" value="1"/>
</dbReference>
<dbReference type="Gene3D" id="1.10.3090.10">
    <property type="entry name" value="cca-adding enzyme, domain 2"/>
    <property type="match status" value="1"/>
</dbReference>
<dbReference type="HAMAP" id="MF_00277">
    <property type="entry name" value="PII_uridylyl_transf"/>
    <property type="match status" value="1"/>
</dbReference>
<dbReference type="InterPro" id="IPR045865">
    <property type="entry name" value="ACT-like_dom_sf"/>
</dbReference>
<dbReference type="InterPro" id="IPR002912">
    <property type="entry name" value="ACT_dom"/>
</dbReference>
<dbReference type="InterPro" id="IPR003607">
    <property type="entry name" value="HD/PDEase_dom"/>
</dbReference>
<dbReference type="InterPro" id="IPR006674">
    <property type="entry name" value="HD_domain"/>
</dbReference>
<dbReference type="InterPro" id="IPR043519">
    <property type="entry name" value="NT_sf"/>
</dbReference>
<dbReference type="InterPro" id="IPR013546">
    <property type="entry name" value="PII_UdlTrfase/GS_AdlTrfase"/>
</dbReference>
<dbReference type="InterPro" id="IPR002934">
    <property type="entry name" value="Polymerase_NTP_transf_dom"/>
</dbReference>
<dbReference type="InterPro" id="IPR010043">
    <property type="entry name" value="UTase/UR"/>
</dbReference>
<dbReference type="NCBIfam" id="NF003467">
    <property type="entry name" value="PRK05092.1"/>
    <property type="match status" value="1"/>
</dbReference>
<dbReference type="NCBIfam" id="TIGR01693">
    <property type="entry name" value="UTase_glnD"/>
    <property type="match status" value="1"/>
</dbReference>
<dbReference type="PANTHER" id="PTHR47320">
    <property type="entry name" value="BIFUNCTIONAL URIDYLYLTRANSFERASE/URIDYLYL-REMOVING ENZYME"/>
    <property type="match status" value="1"/>
</dbReference>
<dbReference type="PANTHER" id="PTHR47320:SF1">
    <property type="entry name" value="BIFUNCTIONAL URIDYLYLTRANSFERASE_URIDYLYL-REMOVING ENZYME"/>
    <property type="match status" value="1"/>
</dbReference>
<dbReference type="Pfam" id="PF01842">
    <property type="entry name" value="ACT"/>
    <property type="match status" value="1"/>
</dbReference>
<dbReference type="Pfam" id="PF08335">
    <property type="entry name" value="GlnD_UR_UTase"/>
    <property type="match status" value="1"/>
</dbReference>
<dbReference type="Pfam" id="PF01966">
    <property type="entry name" value="HD"/>
    <property type="match status" value="1"/>
</dbReference>
<dbReference type="Pfam" id="PF01909">
    <property type="entry name" value="NTP_transf_2"/>
    <property type="match status" value="1"/>
</dbReference>
<dbReference type="PIRSF" id="PIRSF006288">
    <property type="entry name" value="PII_uridyltransf"/>
    <property type="match status" value="1"/>
</dbReference>
<dbReference type="SMART" id="SM00471">
    <property type="entry name" value="HDc"/>
    <property type="match status" value="1"/>
</dbReference>
<dbReference type="SUPFAM" id="SSF55021">
    <property type="entry name" value="ACT-like"/>
    <property type="match status" value="2"/>
</dbReference>
<dbReference type="SUPFAM" id="SSF81301">
    <property type="entry name" value="Nucleotidyltransferase"/>
    <property type="match status" value="1"/>
</dbReference>
<dbReference type="SUPFAM" id="SSF81593">
    <property type="entry name" value="Nucleotidyltransferase substrate binding subunit/domain"/>
    <property type="match status" value="1"/>
</dbReference>
<dbReference type="SUPFAM" id="SSF81891">
    <property type="entry name" value="Poly A polymerase C-terminal region-like"/>
    <property type="match status" value="1"/>
</dbReference>
<dbReference type="PROSITE" id="PS51671">
    <property type="entry name" value="ACT"/>
    <property type="match status" value="2"/>
</dbReference>
<dbReference type="PROSITE" id="PS51831">
    <property type="entry name" value="HD"/>
    <property type="match status" value="1"/>
</dbReference>
<sequence>MARHETSFPEILDVAALRARCDFIASAHAEQREPMRRALLAAFKEANVAGRAKARELLAADGAGIKCAERISWLQDQLITLLHDFVLNQVFDAAKAPEASRIAVTAVGGYGRGTLAPGSDIDLLFLLPAKKAVWAEPAIEFMLYILWDLGFKVGHATRTIEECIRLSRADMTIRTAILECRYVCGSAALANELETRFDHEIVRNTGPEFIAAKLAERDERHRKAGDTRYLVEPNVKEGKGGLRDLHTLFWISKYFYRVKDSADLVKLGVLSKQEYKLFQKAEDFLWAVRCHMHFLTGKAEERLSFDIQREIAEALGYHDHPGLSAVERFMKHYFLVAKDVGDLTRIFCSALEDQQAKDTPGITGVISRFRNRVRKIAGTLDFVDDGGRIALAGTDVFKRDPVNLMRLFHIADINGLEFHPAALKQVTRSLGLITPHLRENEEANRLFLSILTSRRNPELILRRMNEAGVLGRFIPEFGKIVSMMQFNMYHHYTVDEHLLRSVDVLSRIERGLEEEAHPLTAMLMPGIEDREALYVAVLLHDIAKGRPEDHSVAGAKVARKLCPRFRLTPKQTEMVVWLVEEHLTMSMVAQTRDLNDRKTIVDFAERVQSLERLKMLLILTVCDIRAVGPGVWNGWKGQLLRTLYYETELLLSGGFSELSRKERAKHAAHMLEEALADWPKKERQAYVRLHYQPYLLTVALEEQVRHAGFIREADRAGRTLATMVRTHDFHAITEITVLSPDHPRLLTVIAGACAAAGANIVGAQIHTTSDGRALDTILVNREFSVAEDETRRAASIGKLIEDVLSGRKRLPEVIASRTRVKKRSRAFTVTPEVTISNTLSNKFTVIEVEGLDRTGLLSEVTAVLSDLSLDIASAHITTFGEKVIDTFYVTDLVGSKITSENRQMNIAARLKAVLAGEVDEARERMPSGIIAPTPVSRVPHGSKTTKAET</sequence>
<reference key="1">
    <citation type="journal article" date="2001" name="J. Bacteriol.">
        <title>glnD and mviN are genes of an essential operon in Sinorhizobium meliloti.</title>
        <authorList>
            <person name="Rudnick P.A."/>
            <person name="Arcondeguy T."/>
            <person name="Kennedy C.K."/>
            <person name="Kahn D."/>
        </authorList>
    </citation>
    <scope>NUCLEOTIDE SEQUENCE [GENOMIC DNA]</scope>
</reference>
<reference key="2">
    <citation type="journal article" date="2001" name="Proc. Natl. Acad. Sci. U.S.A.">
        <title>Analysis of the chromosome sequence of the legume symbiont Sinorhizobium meliloti strain 1021.</title>
        <authorList>
            <person name="Capela D."/>
            <person name="Barloy-Hubler F."/>
            <person name="Gouzy J."/>
            <person name="Bothe G."/>
            <person name="Ampe F."/>
            <person name="Batut J."/>
            <person name="Boistard P."/>
            <person name="Becker A."/>
            <person name="Boutry M."/>
            <person name="Cadieu E."/>
            <person name="Dreano S."/>
            <person name="Gloux S."/>
            <person name="Godrie T."/>
            <person name="Goffeau A."/>
            <person name="Kahn D."/>
            <person name="Kiss E."/>
            <person name="Lelaure V."/>
            <person name="Masuy D."/>
            <person name="Pohl T."/>
            <person name="Portetelle D."/>
            <person name="Puehler A."/>
            <person name="Purnelle B."/>
            <person name="Ramsperger U."/>
            <person name="Renard C."/>
            <person name="Thebault P."/>
            <person name="Vandenbol M."/>
            <person name="Weidner S."/>
            <person name="Galibert F."/>
        </authorList>
    </citation>
    <scope>NUCLEOTIDE SEQUENCE [LARGE SCALE GENOMIC DNA]</scope>
    <source>
        <strain>1021</strain>
    </source>
</reference>
<reference key="3">
    <citation type="journal article" date="2001" name="Science">
        <title>The composite genome of the legume symbiont Sinorhizobium meliloti.</title>
        <authorList>
            <person name="Galibert F."/>
            <person name="Finan T.M."/>
            <person name="Long S.R."/>
            <person name="Puehler A."/>
            <person name="Abola P."/>
            <person name="Ampe F."/>
            <person name="Barloy-Hubler F."/>
            <person name="Barnett M.J."/>
            <person name="Becker A."/>
            <person name="Boistard P."/>
            <person name="Bothe G."/>
            <person name="Boutry M."/>
            <person name="Bowser L."/>
            <person name="Buhrmester J."/>
            <person name="Cadieu E."/>
            <person name="Capela D."/>
            <person name="Chain P."/>
            <person name="Cowie A."/>
            <person name="Davis R.W."/>
            <person name="Dreano S."/>
            <person name="Federspiel N.A."/>
            <person name="Fisher R.F."/>
            <person name="Gloux S."/>
            <person name="Godrie T."/>
            <person name="Goffeau A."/>
            <person name="Golding B."/>
            <person name="Gouzy J."/>
            <person name="Gurjal M."/>
            <person name="Hernandez-Lucas I."/>
            <person name="Hong A."/>
            <person name="Huizar L."/>
            <person name="Hyman R.W."/>
            <person name="Jones T."/>
            <person name="Kahn D."/>
            <person name="Kahn M.L."/>
            <person name="Kalman S."/>
            <person name="Keating D.H."/>
            <person name="Kiss E."/>
            <person name="Komp C."/>
            <person name="Lelaure V."/>
            <person name="Masuy D."/>
            <person name="Palm C."/>
            <person name="Peck M.C."/>
            <person name="Pohl T.M."/>
            <person name="Portetelle D."/>
            <person name="Purnelle B."/>
            <person name="Ramsperger U."/>
            <person name="Surzycki R."/>
            <person name="Thebault P."/>
            <person name="Vandenbol M."/>
            <person name="Vorhoelter F.J."/>
            <person name="Weidner S."/>
            <person name="Wells D.H."/>
            <person name="Wong K."/>
            <person name="Yeh K.-C."/>
            <person name="Batut J."/>
        </authorList>
    </citation>
    <scope>NUCLEOTIDE SEQUENCE [LARGE SCALE GENOMIC DNA]</scope>
    <source>
        <strain>1021</strain>
    </source>
</reference>
<proteinExistence type="inferred from homology"/>
<gene>
    <name evidence="1" type="primary">glnD</name>
    <name type="ordered locus">R00396</name>
    <name type="ORF">SMc01124</name>
</gene>